<reference key="1">
    <citation type="submission" date="2008-02" db="EMBL/GenBank/DDBJ databases">
        <title>Complete sequence of Pseudomonas putida W619.</title>
        <authorList>
            <person name="Copeland A."/>
            <person name="Lucas S."/>
            <person name="Lapidus A."/>
            <person name="Barry K."/>
            <person name="Detter J.C."/>
            <person name="Glavina del Rio T."/>
            <person name="Dalin E."/>
            <person name="Tice H."/>
            <person name="Pitluck S."/>
            <person name="Chain P."/>
            <person name="Malfatti S."/>
            <person name="Shin M."/>
            <person name="Vergez L."/>
            <person name="Schmutz J."/>
            <person name="Larimer F."/>
            <person name="Land M."/>
            <person name="Hauser L."/>
            <person name="Kyrpides N."/>
            <person name="Kim E."/>
            <person name="Taghavi S."/>
            <person name="Vangronsveld D."/>
            <person name="van der Lelie D."/>
            <person name="Richardson P."/>
        </authorList>
    </citation>
    <scope>NUCLEOTIDE SEQUENCE [LARGE SCALE GENOMIC DNA]</scope>
    <source>
        <strain>W619</strain>
    </source>
</reference>
<feature type="chain" id="PRO_1000141304" description="Small ribosomal subunit protein uS13">
    <location>
        <begin position="1"/>
        <end position="118"/>
    </location>
</feature>
<feature type="region of interest" description="Disordered" evidence="2">
    <location>
        <begin position="92"/>
        <end position="118"/>
    </location>
</feature>
<keyword id="KW-0687">Ribonucleoprotein</keyword>
<keyword id="KW-0689">Ribosomal protein</keyword>
<keyword id="KW-0694">RNA-binding</keyword>
<keyword id="KW-0699">rRNA-binding</keyword>
<keyword id="KW-0820">tRNA-binding</keyword>
<name>RS13_PSEPW</name>
<protein>
    <recommendedName>
        <fullName evidence="1">Small ribosomal subunit protein uS13</fullName>
    </recommendedName>
    <alternativeName>
        <fullName evidence="3">30S ribosomal protein S13</fullName>
    </alternativeName>
</protein>
<sequence>MARIAGVNIPDNKHTVISLTYIYGVGRTTAQKICADAGVNPAAKIKDLSDEQIETLRGEVAKFTTEGDLRRDVNMKIKRLMDLGCYRGLRHRKGLPVRGQRTKTNARTRKGPRKPIRK</sequence>
<proteinExistence type="inferred from homology"/>
<comment type="function">
    <text evidence="1">Located at the top of the head of the 30S subunit, it contacts several helices of the 16S rRNA. In the 70S ribosome it contacts the 23S rRNA (bridge B1a) and protein L5 of the 50S subunit (bridge B1b), connecting the 2 subunits; these bridges are implicated in subunit movement. Contacts the tRNAs in the A and P-sites.</text>
</comment>
<comment type="subunit">
    <text evidence="1">Part of the 30S ribosomal subunit. Forms a loose heterodimer with protein S19. Forms two bridges to the 50S subunit in the 70S ribosome.</text>
</comment>
<comment type="similarity">
    <text evidence="1">Belongs to the universal ribosomal protein uS13 family.</text>
</comment>
<evidence type="ECO:0000255" key="1">
    <source>
        <dbReference type="HAMAP-Rule" id="MF_01315"/>
    </source>
</evidence>
<evidence type="ECO:0000256" key="2">
    <source>
        <dbReference type="SAM" id="MobiDB-lite"/>
    </source>
</evidence>
<evidence type="ECO:0000305" key="3"/>
<organism>
    <name type="scientific">Pseudomonas putida (strain W619)</name>
    <dbReference type="NCBI Taxonomy" id="390235"/>
    <lineage>
        <taxon>Bacteria</taxon>
        <taxon>Pseudomonadati</taxon>
        <taxon>Pseudomonadota</taxon>
        <taxon>Gammaproteobacteria</taxon>
        <taxon>Pseudomonadales</taxon>
        <taxon>Pseudomonadaceae</taxon>
        <taxon>Pseudomonas</taxon>
    </lineage>
</organism>
<accession>B1JAJ0</accession>
<dbReference type="EMBL" id="CP000949">
    <property type="protein sequence ID" value="ACA75203.1"/>
    <property type="molecule type" value="Genomic_DNA"/>
</dbReference>
<dbReference type="SMR" id="B1JAJ0"/>
<dbReference type="STRING" id="390235.PputW619_4727"/>
<dbReference type="KEGG" id="ppw:PputW619_4727"/>
<dbReference type="eggNOG" id="COG0099">
    <property type="taxonomic scope" value="Bacteria"/>
</dbReference>
<dbReference type="HOGENOM" id="CLU_103849_1_2_6"/>
<dbReference type="OrthoDB" id="9803610at2"/>
<dbReference type="GO" id="GO:0005829">
    <property type="term" value="C:cytosol"/>
    <property type="evidence" value="ECO:0007669"/>
    <property type="project" value="TreeGrafter"/>
</dbReference>
<dbReference type="GO" id="GO:0015935">
    <property type="term" value="C:small ribosomal subunit"/>
    <property type="evidence" value="ECO:0007669"/>
    <property type="project" value="TreeGrafter"/>
</dbReference>
<dbReference type="GO" id="GO:0019843">
    <property type="term" value="F:rRNA binding"/>
    <property type="evidence" value="ECO:0007669"/>
    <property type="project" value="UniProtKB-UniRule"/>
</dbReference>
<dbReference type="GO" id="GO:0003735">
    <property type="term" value="F:structural constituent of ribosome"/>
    <property type="evidence" value="ECO:0007669"/>
    <property type="project" value="InterPro"/>
</dbReference>
<dbReference type="GO" id="GO:0000049">
    <property type="term" value="F:tRNA binding"/>
    <property type="evidence" value="ECO:0007669"/>
    <property type="project" value="UniProtKB-UniRule"/>
</dbReference>
<dbReference type="GO" id="GO:0006412">
    <property type="term" value="P:translation"/>
    <property type="evidence" value="ECO:0007669"/>
    <property type="project" value="UniProtKB-UniRule"/>
</dbReference>
<dbReference type="FunFam" id="1.10.8.50:FF:000001">
    <property type="entry name" value="30S ribosomal protein S13"/>
    <property type="match status" value="1"/>
</dbReference>
<dbReference type="FunFam" id="4.10.910.10:FF:000001">
    <property type="entry name" value="30S ribosomal protein S13"/>
    <property type="match status" value="1"/>
</dbReference>
<dbReference type="Gene3D" id="1.10.8.50">
    <property type="match status" value="1"/>
</dbReference>
<dbReference type="Gene3D" id="4.10.910.10">
    <property type="entry name" value="30s ribosomal protein s13, domain 2"/>
    <property type="match status" value="1"/>
</dbReference>
<dbReference type="HAMAP" id="MF_01315">
    <property type="entry name" value="Ribosomal_uS13"/>
    <property type="match status" value="1"/>
</dbReference>
<dbReference type="InterPro" id="IPR027437">
    <property type="entry name" value="Rbsml_uS13_C"/>
</dbReference>
<dbReference type="InterPro" id="IPR001892">
    <property type="entry name" value="Ribosomal_uS13"/>
</dbReference>
<dbReference type="InterPro" id="IPR010979">
    <property type="entry name" value="Ribosomal_uS13-like_H2TH"/>
</dbReference>
<dbReference type="InterPro" id="IPR019980">
    <property type="entry name" value="Ribosomal_uS13_bac-type"/>
</dbReference>
<dbReference type="InterPro" id="IPR018269">
    <property type="entry name" value="Ribosomal_uS13_CS"/>
</dbReference>
<dbReference type="NCBIfam" id="TIGR03631">
    <property type="entry name" value="uS13_bact"/>
    <property type="match status" value="1"/>
</dbReference>
<dbReference type="PANTHER" id="PTHR10871">
    <property type="entry name" value="30S RIBOSOMAL PROTEIN S13/40S RIBOSOMAL PROTEIN S18"/>
    <property type="match status" value="1"/>
</dbReference>
<dbReference type="PANTHER" id="PTHR10871:SF1">
    <property type="entry name" value="SMALL RIBOSOMAL SUBUNIT PROTEIN US13M"/>
    <property type="match status" value="1"/>
</dbReference>
<dbReference type="Pfam" id="PF00416">
    <property type="entry name" value="Ribosomal_S13"/>
    <property type="match status" value="1"/>
</dbReference>
<dbReference type="PIRSF" id="PIRSF002134">
    <property type="entry name" value="Ribosomal_S13"/>
    <property type="match status" value="1"/>
</dbReference>
<dbReference type="SUPFAM" id="SSF46946">
    <property type="entry name" value="S13-like H2TH domain"/>
    <property type="match status" value="1"/>
</dbReference>
<dbReference type="PROSITE" id="PS00646">
    <property type="entry name" value="RIBOSOMAL_S13_1"/>
    <property type="match status" value="1"/>
</dbReference>
<dbReference type="PROSITE" id="PS50159">
    <property type="entry name" value="RIBOSOMAL_S13_2"/>
    <property type="match status" value="1"/>
</dbReference>
<gene>
    <name evidence="1" type="primary">rpsM</name>
    <name type="ordered locus">PputW619_4727</name>
</gene>